<sequence length="156" mass="17816">MNKIESRHRLIRSLIMEKKVHTQQELQELLEANGVIVTQSTLSRDMKALNLVKVTENNISYYVINSIAPSRWEKRLRFYMEDALIMLRPVQNQVVMKTLPGLAQSFGAILDALELPQIVATVCGDDVCLIICEDNPSAIECFDKLKEFAPPFFFSK</sequence>
<keyword id="KW-0010">Activator</keyword>
<keyword id="KW-0056">Arginine metabolism</keyword>
<keyword id="KW-0963">Cytoplasm</keyword>
<keyword id="KW-0238">DNA-binding</keyword>
<keyword id="KW-1185">Reference proteome</keyword>
<keyword id="KW-0804">Transcription</keyword>
<keyword id="KW-0805">Transcription regulation</keyword>
<comment type="function">
    <text evidence="1">In the presence of arginine, coactivates the transcription of the arcABDC operon, with other regulatory proteins such as ArcR and CcpA.</text>
</comment>
<comment type="pathway">
    <text>Amino-acid degradation; L-arginine degradation via ADI pathway.</text>
</comment>
<comment type="subcellular location">
    <subcellularLocation>
        <location evidence="2">Cytoplasm</location>
    </subcellularLocation>
</comment>
<comment type="similarity">
    <text evidence="2">Belongs to the ArgR family.</text>
</comment>
<name>ARGR_STRGC</name>
<organism>
    <name type="scientific">Streptococcus gordonii (strain Challis / ATCC 35105 / BCRC 15272 / CH1 / DL1 / V288)</name>
    <dbReference type="NCBI Taxonomy" id="467705"/>
    <lineage>
        <taxon>Bacteria</taxon>
        <taxon>Bacillati</taxon>
        <taxon>Bacillota</taxon>
        <taxon>Bacilli</taxon>
        <taxon>Lactobacillales</taxon>
        <taxon>Streptococcaceae</taxon>
        <taxon>Streptococcus</taxon>
    </lineage>
</organism>
<dbReference type="EMBL" id="AF534569">
    <property type="protein sequence ID" value="AAN65260.1"/>
    <property type="molecule type" value="Genomic_DNA"/>
</dbReference>
<dbReference type="EMBL" id="CP000725">
    <property type="protein sequence ID" value="ABV10990.1"/>
    <property type="molecule type" value="Genomic_DNA"/>
</dbReference>
<dbReference type="RefSeq" id="WP_012130653.1">
    <property type="nucleotide sequence ID" value="NC_009785.1"/>
</dbReference>
<dbReference type="SMR" id="Q8GND0"/>
<dbReference type="STRING" id="467705.SGO_1588"/>
<dbReference type="KEGG" id="sgo:SGO_1588"/>
<dbReference type="eggNOG" id="COG1438">
    <property type="taxonomic scope" value="Bacteria"/>
</dbReference>
<dbReference type="HOGENOM" id="CLU_097103_3_1_9"/>
<dbReference type="UniPathway" id="UPA00254"/>
<dbReference type="Proteomes" id="UP000001131">
    <property type="component" value="Chromosome"/>
</dbReference>
<dbReference type="GO" id="GO:0005737">
    <property type="term" value="C:cytoplasm"/>
    <property type="evidence" value="ECO:0007669"/>
    <property type="project" value="UniProtKB-SubCell"/>
</dbReference>
<dbReference type="GO" id="GO:0034618">
    <property type="term" value="F:arginine binding"/>
    <property type="evidence" value="ECO:0007669"/>
    <property type="project" value="InterPro"/>
</dbReference>
<dbReference type="GO" id="GO:0003677">
    <property type="term" value="F:DNA binding"/>
    <property type="evidence" value="ECO:0007669"/>
    <property type="project" value="UniProtKB-KW"/>
</dbReference>
<dbReference type="GO" id="GO:0003700">
    <property type="term" value="F:DNA-binding transcription factor activity"/>
    <property type="evidence" value="ECO:0007669"/>
    <property type="project" value="UniProtKB-UniRule"/>
</dbReference>
<dbReference type="GO" id="GO:0019547">
    <property type="term" value="P:arginine catabolic process to ornithine"/>
    <property type="evidence" value="ECO:0007669"/>
    <property type="project" value="UniProtKB-UniPathway"/>
</dbReference>
<dbReference type="GO" id="GO:0051259">
    <property type="term" value="P:protein complex oligomerization"/>
    <property type="evidence" value="ECO:0007669"/>
    <property type="project" value="InterPro"/>
</dbReference>
<dbReference type="GO" id="GO:1900079">
    <property type="term" value="P:regulation of arginine biosynthetic process"/>
    <property type="evidence" value="ECO:0007669"/>
    <property type="project" value="UniProtKB-UniRule"/>
</dbReference>
<dbReference type="Gene3D" id="3.30.1360.40">
    <property type="match status" value="1"/>
</dbReference>
<dbReference type="Gene3D" id="1.10.10.10">
    <property type="entry name" value="Winged helix-like DNA-binding domain superfamily/Winged helix DNA-binding domain"/>
    <property type="match status" value="1"/>
</dbReference>
<dbReference type="HAMAP" id="MF_00173">
    <property type="entry name" value="Arg_repressor"/>
    <property type="match status" value="1"/>
</dbReference>
<dbReference type="InterPro" id="IPR001669">
    <property type="entry name" value="Arg_repress"/>
</dbReference>
<dbReference type="InterPro" id="IPR020899">
    <property type="entry name" value="Arg_repress_C"/>
</dbReference>
<dbReference type="InterPro" id="IPR036251">
    <property type="entry name" value="Arg_repress_C_sf"/>
</dbReference>
<dbReference type="InterPro" id="IPR020900">
    <property type="entry name" value="Arg_repress_DNA-bd"/>
</dbReference>
<dbReference type="InterPro" id="IPR036388">
    <property type="entry name" value="WH-like_DNA-bd_sf"/>
</dbReference>
<dbReference type="InterPro" id="IPR036390">
    <property type="entry name" value="WH_DNA-bd_sf"/>
</dbReference>
<dbReference type="PANTHER" id="PTHR34471">
    <property type="entry name" value="ARGININE REPRESSOR"/>
    <property type="match status" value="1"/>
</dbReference>
<dbReference type="PANTHER" id="PTHR34471:SF1">
    <property type="entry name" value="ARGININE REPRESSOR"/>
    <property type="match status" value="1"/>
</dbReference>
<dbReference type="Pfam" id="PF01316">
    <property type="entry name" value="Arg_repressor"/>
    <property type="match status" value="1"/>
</dbReference>
<dbReference type="Pfam" id="PF02863">
    <property type="entry name" value="Arg_repressor_C"/>
    <property type="match status" value="1"/>
</dbReference>
<dbReference type="PRINTS" id="PR01467">
    <property type="entry name" value="ARGREPRESSOR"/>
</dbReference>
<dbReference type="SUPFAM" id="SSF55252">
    <property type="entry name" value="C-terminal domain of arginine repressor"/>
    <property type="match status" value="1"/>
</dbReference>
<dbReference type="SUPFAM" id="SSF46785">
    <property type="entry name" value="Winged helix' DNA-binding domain"/>
    <property type="match status" value="1"/>
</dbReference>
<protein>
    <recommendedName>
        <fullName>Arginine regulator</fullName>
    </recommendedName>
</protein>
<accession>Q8GND0</accession>
<accession>A8AYK6</accession>
<reference key="1">
    <citation type="journal article" date="2002" name="Appl. Environ. Microbiol.">
        <title>Isolation and molecular analysis of the gene cluster for the arginine deiminase system from Streptococcus gordonii DL1.</title>
        <authorList>
            <person name="Dong Y."/>
            <person name="Chen Y.-Y.M."/>
            <person name="Snyder J.A."/>
            <person name="Burne R.A."/>
        </authorList>
    </citation>
    <scope>NUCLEOTIDE SEQUENCE [GENOMIC DNA]</scope>
    <scope>FUNCTION</scope>
</reference>
<reference key="2">
    <citation type="journal article" date="2007" name="J. Bacteriol.">
        <title>Genome-wide transcriptional changes in Streptococcus gordonii in response to competence signaling peptide.</title>
        <authorList>
            <person name="Vickerman M.M."/>
            <person name="Iobst S."/>
            <person name="Jesionowski A.M."/>
            <person name="Gill S.R."/>
        </authorList>
    </citation>
    <scope>NUCLEOTIDE SEQUENCE [LARGE SCALE GENOMIC DNA]</scope>
    <source>
        <strain>Challis / ATCC 35105 / BCRC 15272 / CH1 / DL1 / V288</strain>
    </source>
</reference>
<reference key="3">
    <citation type="journal article" date="2006" name="J. Bacteriol.">
        <title>Characterization of cis-acting sites controlling arginine deiminase gene expression in Streptococcus gordonii.</title>
        <authorList>
            <person name="Zeng L."/>
            <person name="Dong Y."/>
            <person name="Burne R.A."/>
        </authorList>
    </citation>
    <scope>DNA-BINDING PROPERTIES</scope>
</reference>
<gene>
    <name type="primary">argR</name>
    <name type="synonym">arcR</name>
    <name type="ordered locus">SGO_1588</name>
</gene>
<feature type="chain" id="PRO_0000254658" description="Arginine regulator">
    <location>
        <begin position="1"/>
        <end position="156"/>
    </location>
</feature>
<proteinExistence type="evidence at protein level"/>
<evidence type="ECO:0000269" key="1">
    <source>
    </source>
</evidence>
<evidence type="ECO:0000305" key="2"/>